<proteinExistence type="evidence at transcript level"/>
<reference key="1">
    <citation type="journal article" date="2008" name="Nat. Genet.">
        <title>Skint1, the prototype of a newly identified immunoglobulin superfamily gene cluster, positively selects epidermal gammadelta T cells.</title>
        <authorList>
            <person name="Boyden L.M."/>
            <person name="Lewis J.M."/>
            <person name="Barbee S.D."/>
            <person name="Bas A."/>
            <person name="Girardi M."/>
            <person name="Hayday A.C."/>
            <person name="Tigelaar R.E."/>
            <person name="Lifton R.P."/>
        </authorList>
    </citation>
    <scope>NUCLEOTIDE SEQUENCE [MRNA]</scope>
    <scope>TISSUE SPECIFICITY</scope>
    <source>
        <strain>C57BL/6J</strain>
    </source>
</reference>
<sequence>MESSASCLPGFFMSFLLLQNTVLTQAMRSDIKINIQVPDTEGLLLECTSGSLIPPAEMTWRDSNGNIIPHSTAFNSQDRDGLLYLKSSILLKNRAKGPITCSIYNVTTNQEKKRSIVLPDALFKSENMSLMSNKFSCPSIYLITIIFLNFLRGILVFCCLRRKPVCFRNLMSTVMEALYSKMGVCCLLIWECLLLVLYIAFLPIYVSFRSRAFLLDDTYPLYTNWLWNICIILTVIMVLFPGLILCLLWTLNCYGQVSSLPPTSMELSTKDSEQNSSKSDDSQENYDVNCKILETCESKIFSQHQESCEDDTASTLFIS</sequence>
<dbReference type="EMBL" id="EF494907">
    <property type="protein sequence ID" value="ABS30729.1"/>
    <property type="molecule type" value="mRNA"/>
</dbReference>
<dbReference type="CCDS" id="CCDS38839.1"/>
<dbReference type="RefSeq" id="NP_808532.1">
    <property type="nucleotide sequence ID" value="NM_177864.3"/>
</dbReference>
<dbReference type="SMR" id="A7TZG3"/>
<dbReference type="FunCoup" id="A7TZG3">
    <property type="interactions" value="11"/>
</dbReference>
<dbReference type="STRING" id="10090.ENSMUSP00000052670"/>
<dbReference type="GlyCosmos" id="A7TZG3">
    <property type="glycosylation" value="1 site, No reported glycans"/>
</dbReference>
<dbReference type="GlyGen" id="A7TZG3">
    <property type="glycosylation" value="1 site"/>
</dbReference>
<dbReference type="PaxDb" id="10090-ENSMUSP00000052670"/>
<dbReference type="ProteomicsDB" id="257025"/>
<dbReference type="DNASU" id="329918"/>
<dbReference type="Ensembl" id="ENSMUST00000058605.3">
    <property type="protein sequence ID" value="ENSMUSP00000052670.3"/>
    <property type="gene ID" value="ENSMUSG00000049972.5"/>
</dbReference>
<dbReference type="GeneID" id="329918"/>
<dbReference type="KEGG" id="mmu:329918"/>
<dbReference type="UCSC" id="uc008udv.1">
    <property type="organism name" value="mouse"/>
</dbReference>
<dbReference type="AGR" id="MGI:3045341"/>
<dbReference type="CTD" id="329918"/>
<dbReference type="MGI" id="MGI:3045341">
    <property type="gene designation" value="Skint9"/>
</dbReference>
<dbReference type="VEuPathDB" id="HostDB:ENSMUSG00000049972"/>
<dbReference type="eggNOG" id="ENOG502THRH">
    <property type="taxonomic scope" value="Eukaryota"/>
</dbReference>
<dbReference type="GeneTree" id="ENSGT00940000165990"/>
<dbReference type="HOGENOM" id="CLU_871423_0_0_1"/>
<dbReference type="InParanoid" id="A7TZG3"/>
<dbReference type="OrthoDB" id="9986391at2759"/>
<dbReference type="PhylomeDB" id="A7TZG3"/>
<dbReference type="TreeFam" id="TF339324"/>
<dbReference type="BioGRID-ORCS" id="329918">
    <property type="hits" value="1 hit in 59 CRISPR screens"/>
</dbReference>
<dbReference type="ChiTaRS" id="Skint9">
    <property type="organism name" value="mouse"/>
</dbReference>
<dbReference type="PRO" id="PR:A7TZG3"/>
<dbReference type="Proteomes" id="UP000000589">
    <property type="component" value="Chromosome 4"/>
</dbReference>
<dbReference type="RNAct" id="A7TZG3">
    <property type="molecule type" value="protein"/>
</dbReference>
<dbReference type="Bgee" id="ENSMUSG00000049972">
    <property type="expression patterns" value="Expressed in zone of skin and 3 other cell types or tissues"/>
</dbReference>
<dbReference type="GO" id="GO:0016020">
    <property type="term" value="C:membrane"/>
    <property type="evidence" value="ECO:0007669"/>
    <property type="project" value="UniProtKB-SubCell"/>
</dbReference>
<dbReference type="FunFam" id="2.60.40.10:FF:000088">
    <property type="entry name" value="Butyrophilin subfamily 1 member A1"/>
    <property type="match status" value="1"/>
</dbReference>
<dbReference type="Gene3D" id="2.60.40.10">
    <property type="entry name" value="Immunoglobulins"/>
    <property type="match status" value="1"/>
</dbReference>
<dbReference type="InterPro" id="IPR053896">
    <property type="entry name" value="BTN3A2-like_Ig-C"/>
</dbReference>
<dbReference type="InterPro" id="IPR007110">
    <property type="entry name" value="Ig-like_dom"/>
</dbReference>
<dbReference type="InterPro" id="IPR036179">
    <property type="entry name" value="Ig-like_dom_sf"/>
</dbReference>
<dbReference type="InterPro" id="IPR013783">
    <property type="entry name" value="Ig-like_fold"/>
</dbReference>
<dbReference type="InterPro" id="IPR050504">
    <property type="entry name" value="IgSF_BTN/MOG"/>
</dbReference>
<dbReference type="PANTHER" id="PTHR24100">
    <property type="entry name" value="BUTYROPHILIN"/>
    <property type="match status" value="1"/>
</dbReference>
<dbReference type="PANTHER" id="PTHR24100:SF148">
    <property type="entry name" value="SELECTION AND UPKEEP OF INTRAEPITHELIAL T-CELLS PROTEIN 10-RELATED"/>
    <property type="match status" value="1"/>
</dbReference>
<dbReference type="Pfam" id="PF22705">
    <property type="entry name" value="C2-set_3"/>
    <property type="match status" value="1"/>
</dbReference>
<dbReference type="SUPFAM" id="SSF48726">
    <property type="entry name" value="Immunoglobulin"/>
    <property type="match status" value="1"/>
</dbReference>
<dbReference type="PROSITE" id="PS50835">
    <property type="entry name" value="IG_LIKE"/>
    <property type="match status" value="1"/>
</dbReference>
<protein>
    <recommendedName>
        <fullName>Selection and upkeep of intraepithelial T-cells protein 9</fullName>
        <shortName>Skint-9</shortName>
    </recommendedName>
</protein>
<gene>
    <name type="primary">Skint9</name>
</gene>
<accession>A7TZG3</accession>
<feature type="signal peptide" evidence="2">
    <location>
        <begin position="1"/>
        <end position="26"/>
    </location>
</feature>
<feature type="chain" id="PRO_5000270118" description="Selection and upkeep of intraepithelial T-cells protein 9">
    <location>
        <begin position="27"/>
        <end position="319"/>
    </location>
</feature>
<feature type="topological domain" description="Extracellular" evidence="2">
    <location>
        <begin position="27"/>
        <end position="139"/>
    </location>
</feature>
<feature type="transmembrane region" description="Helical" evidence="2">
    <location>
        <begin position="140"/>
        <end position="160"/>
    </location>
</feature>
<feature type="topological domain" description="Cytoplasmic" evidence="2">
    <location>
        <begin position="161"/>
        <end position="183"/>
    </location>
</feature>
<feature type="transmembrane region" description="Helical" evidence="2">
    <location>
        <begin position="184"/>
        <end position="204"/>
    </location>
</feature>
<feature type="topological domain" description="Extracellular" evidence="2">
    <location>
        <begin position="205"/>
        <end position="228"/>
    </location>
</feature>
<feature type="transmembrane region" description="Helical" evidence="2">
    <location>
        <begin position="229"/>
        <end position="249"/>
    </location>
</feature>
<feature type="topological domain" description="Cytoplasmic" evidence="2">
    <location>
        <begin position="250"/>
        <end position="319"/>
    </location>
</feature>
<feature type="domain" description="Ig-like V-type">
    <location>
        <begin position="27"/>
        <end position="117"/>
    </location>
</feature>
<feature type="glycosylation site" description="N-linked (GlcNAc...) asparagine" evidence="2">
    <location>
        <position position="105"/>
    </location>
</feature>
<feature type="disulfide bond" evidence="3">
    <location>
        <begin position="47"/>
        <end position="101"/>
    </location>
</feature>
<keyword id="KW-1015">Disulfide bond</keyword>
<keyword id="KW-0325">Glycoprotein</keyword>
<keyword id="KW-0393">Immunoglobulin domain</keyword>
<keyword id="KW-0472">Membrane</keyword>
<keyword id="KW-1185">Reference proteome</keyword>
<keyword id="KW-0732">Signal</keyword>
<keyword id="KW-0812">Transmembrane</keyword>
<keyword id="KW-1133">Transmembrane helix</keyword>
<evidence type="ECO:0000250" key="1"/>
<evidence type="ECO:0000255" key="2"/>
<evidence type="ECO:0000255" key="3">
    <source>
        <dbReference type="PROSITE-ProRule" id="PRU00114"/>
    </source>
</evidence>
<evidence type="ECO:0000269" key="4">
    <source>
    </source>
</evidence>
<evidence type="ECO:0000305" key="5"/>
<name>SKIT9_MOUSE</name>
<organism>
    <name type="scientific">Mus musculus</name>
    <name type="common">Mouse</name>
    <dbReference type="NCBI Taxonomy" id="10090"/>
    <lineage>
        <taxon>Eukaryota</taxon>
        <taxon>Metazoa</taxon>
        <taxon>Chordata</taxon>
        <taxon>Craniata</taxon>
        <taxon>Vertebrata</taxon>
        <taxon>Euteleostomi</taxon>
        <taxon>Mammalia</taxon>
        <taxon>Eutheria</taxon>
        <taxon>Euarchontoglires</taxon>
        <taxon>Glires</taxon>
        <taxon>Rodentia</taxon>
        <taxon>Myomorpha</taxon>
        <taxon>Muroidea</taxon>
        <taxon>Muridae</taxon>
        <taxon>Murinae</taxon>
        <taxon>Mus</taxon>
        <taxon>Mus</taxon>
    </lineage>
</organism>
<comment type="function">
    <text evidence="1">May act by engaging a cell surface molecule on immature T-cells in the embryonic thymus.</text>
</comment>
<comment type="subcellular location">
    <subcellularLocation>
        <location evidence="5">Membrane</location>
        <topology evidence="5">Multi-pass membrane protein</topology>
    </subcellularLocation>
</comment>
<comment type="tissue specificity">
    <text evidence="4">Expressed in skin, thymus and testis.</text>
</comment>
<comment type="miscellaneous">
    <text>Encoded by one of the 11 copies of Skint genes clustered in the D1 region of the chromosome 4.</text>
</comment>
<comment type="similarity">
    <text evidence="5">Belongs to the SKINT family.</text>
</comment>